<feature type="chain" id="PRO_0000096560" description="Phosphatidylglycerol lysyltransferase">
    <location>
        <begin position="1"/>
        <end position="840"/>
    </location>
</feature>
<feature type="topological domain" description="Cytoplasmic" evidence="2">
    <location>
        <begin position="1"/>
        <end position="8"/>
    </location>
</feature>
<feature type="transmembrane region" description="Helical" evidence="2">
    <location>
        <begin position="9"/>
        <end position="29"/>
    </location>
</feature>
<feature type="topological domain" description="Extracellular" evidence="2">
    <location>
        <begin position="30"/>
        <end position="52"/>
    </location>
</feature>
<feature type="transmembrane region" description="Helical" evidence="2">
    <location>
        <begin position="53"/>
        <end position="73"/>
    </location>
</feature>
<feature type="topological domain" description="Cytoplasmic" evidence="2">
    <location>
        <begin position="74"/>
        <end position="89"/>
    </location>
</feature>
<feature type="transmembrane region" description="Helical" evidence="2">
    <location>
        <begin position="90"/>
        <end position="110"/>
    </location>
</feature>
<feature type="topological domain" description="Extracellular" evidence="2">
    <location>
        <begin position="111"/>
        <end position="128"/>
    </location>
</feature>
<feature type="transmembrane region" description="Helical" evidence="2">
    <location>
        <begin position="129"/>
        <end position="149"/>
    </location>
</feature>
<feature type="topological domain" description="Cytoplasmic" evidence="2">
    <location>
        <begin position="150"/>
        <end position="161"/>
    </location>
</feature>
<feature type="transmembrane region" description="Helical" evidence="2">
    <location>
        <begin position="162"/>
        <end position="182"/>
    </location>
</feature>
<feature type="topological domain" description="Extracellular" evidence="2">
    <location>
        <begin position="183"/>
        <end position="200"/>
    </location>
</feature>
<feature type="transmembrane region" description="Helical" evidence="2">
    <location>
        <begin position="201"/>
        <end position="221"/>
    </location>
</feature>
<feature type="topological domain" description="Cytoplasmic" evidence="2">
    <location>
        <begin position="222"/>
        <end position="229"/>
    </location>
</feature>
<feature type="transmembrane region" description="Helical" evidence="2">
    <location>
        <begin position="230"/>
        <end position="250"/>
    </location>
</feature>
<feature type="topological domain" description="Extracellular" evidence="2">
    <location>
        <begin position="251"/>
        <end position="271"/>
    </location>
</feature>
<feature type="transmembrane region" description="Helical" evidence="2">
    <location>
        <begin position="272"/>
        <end position="292"/>
    </location>
</feature>
<feature type="topological domain" description="Cytoplasmic" evidence="2">
    <location>
        <begin position="293"/>
        <end position="337"/>
    </location>
</feature>
<feature type="transmembrane region" description="Helical" evidence="2">
    <location>
        <begin position="338"/>
        <end position="358"/>
    </location>
</feature>
<feature type="topological domain" description="Extracellular" evidence="2">
    <location>
        <begin position="359"/>
        <end position="369"/>
    </location>
</feature>
<feature type="transmembrane region" description="Helical" evidence="2">
    <location>
        <begin position="370"/>
        <end position="390"/>
    </location>
</feature>
<feature type="topological domain" description="Cytoplasmic" evidence="2">
    <location>
        <begin position="391"/>
        <end position="394"/>
    </location>
</feature>
<feature type="transmembrane region" description="Helical" evidence="2">
    <location>
        <begin position="395"/>
        <end position="415"/>
    </location>
</feature>
<feature type="transmembrane region" description="Helical" evidence="2">
    <location>
        <begin position="416"/>
        <end position="436"/>
    </location>
</feature>
<feature type="topological domain" description="Cytoplasmic" evidence="2">
    <location>
        <begin position="437"/>
        <end position="450"/>
    </location>
</feature>
<feature type="transmembrane region" description="Helical" evidence="2">
    <location>
        <begin position="451"/>
        <end position="471"/>
    </location>
</feature>
<feature type="topological domain" description="Extracellular" evidence="2">
    <location>
        <begin position="472"/>
        <end position="489"/>
    </location>
</feature>
<feature type="transmembrane region" description="Helical" evidence="2">
    <location>
        <begin position="490"/>
        <end position="510"/>
    </location>
</feature>
<feature type="topological domain" description="Cytoplasmic" evidence="2">
    <location>
        <begin position="511"/>
        <end position="840"/>
    </location>
</feature>
<dbReference type="EC" id="2.3.2.3"/>
<dbReference type="EMBL" id="BA000017">
    <property type="protein sequence ID" value="BAB57522.1"/>
    <property type="molecule type" value="Genomic_DNA"/>
</dbReference>
<dbReference type="RefSeq" id="WP_001071136.1">
    <property type="nucleotide sequence ID" value="NC_002758.2"/>
</dbReference>
<dbReference type="SMR" id="Q99UB9"/>
<dbReference type="KEGG" id="sav:SAV1360"/>
<dbReference type="HOGENOM" id="CLU_008255_7_1_9"/>
<dbReference type="PhylomeDB" id="Q99UB9"/>
<dbReference type="Proteomes" id="UP000002481">
    <property type="component" value="Chromosome"/>
</dbReference>
<dbReference type="GO" id="GO:0005886">
    <property type="term" value="C:plasma membrane"/>
    <property type="evidence" value="ECO:0007669"/>
    <property type="project" value="UniProtKB-SubCell"/>
</dbReference>
<dbReference type="GO" id="GO:0050071">
    <property type="term" value="F:phosphatidylglycerol lysyltransferase activity"/>
    <property type="evidence" value="ECO:0007669"/>
    <property type="project" value="UniProtKB-EC"/>
</dbReference>
<dbReference type="GO" id="GO:0006629">
    <property type="term" value="P:lipid metabolic process"/>
    <property type="evidence" value="ECO:0007669"/>
    <property type="project" value="UniProtKB-KW"/>
</dbReference>
<dbReference type="GO" id="GO:0055091">
    <property type="term" value="P:phospholipid homeostasis"/>
    <property type="evidence" value="ECO:0007669"/>
    <property type="project" value="TreeGrafter"/>
</dbReference>
<dbReference type="GO" id="GO:0046677">
    <property type="term" value="P:response to antibiotic"/>
    <property type="evidence" value="ECO:0007669"/>
    <property type="project" value="UniProtKB-KW"/>
</dbReference>
<dbReference type="InterPro" id="IPR016181">
    <property type="entry name" value="Acyl_CoA_acyltransferase"/>
</dbReference>
<dbReference type="InterPro" id="IPR022791">
    <property type="entry name" value="L-PG_synthase/AglD"/>
</dbReference>
<dbReference type="InterPro" id="IPR024320">
    <property type="entry name" value="LPG_synthase_C"/>
</dbReference>
<dbReference type="InterPro" id="IPR051211">
    <property type="entry name" value="PG_lysyltransferase"/>
</dbReference>
<dbReference type="NCBIfam" id="NF033480">
    <property type="entry name" value="bifunc_MprF"/>
    <property type="match status" value="1"/>
</dbReference>
<dbReference type="NCBIfam" id="TIGR00374">
    <property type="entry name" value="flippase-like domain"/>
    <property type="match status" value="1"/>
</dbReference>
<dbReference type="PANTHER" id="PTHR34697">
    <property type="entry name" value="PHOSPHATIDYLGLYCEROL LYSYLTRANSFERASE"/>
    <property type="match status" value="1"/>
</dbReference>
<dbReference type="PANTHER" id="PTHR34697:SF2">
    <property type="entry name" value="PHOSPHATIDYLGLYCEROL LYSYLTRANSFERASE"/>
    <property type="match status" value="1"/>
</dbReference>
<dbReference type="Pfam" id="PF09924">
    <property type="entry name" value="LPG_synthase_C"/>
    <property type="match status" value="1"/>
</dbReference>
<dbReference type="Pfam" id="PF03706">
    <property type="entry name" value="LPG_synthase_TM"/>
    <property type="match status" value="1"/>
</dbReference>
<dbReference type="SUPFAM" id="SSF55729">
    <property type="entry name" value="Acyl-CoA N-acyltransferases (Nat)"/>
    <property type="match status" value="1"/>
</dbReference>
<accession>Q99UB9</accession>
<protein>
    <recommendedName>
        <fullName>Phosphatidylglycerol lysyltransferase</fullName>
        <ecNumber>2.3.2.3</ecNumber>
    </recommendedName>
    <alternativeName>
        <fullName>Lysylphosphatidylglycerol synthase</fullName>
        <shortName>LPG synthase</shortName>
    </alternativeName>
    <alternativeName>
        <fullName>Multiple peptide resistance factor</fullName>
    </alternativeName>
</protein>
<keyword id="KW-0046">Antibiotic resistance</keyword>
<keyword id="KW-1003">Cell membrane</keyword>
<keyword id="KW-0443">Lipid metabolism</keyword>
<keyword id="KW-0472">Membrane</keyword>
<keyword id="KW-0808">Transferase</keyword>
<keyword id="KW-0812">Transmembrane</keyword>
<keyword id="KW-1133">Transmembrane helix</keyword>
<keyword id="KW-0843">Virulence</keyword>
<organism>
    <name type="scientific">Staphylococcus aureus (strain Mu50 / ATCC 700699)</name>
    <dbReference type="NCBI Taxonomy" id="158878"/>
    <lineage>
        <taxon>Bacteria</taxon>
        <taxon>Bacillati</taxon>
        <taxon>Bacillota</taxon>
        <taxon>Bacilli</taxon>
        <taxon>Bacillales</taxon>
        <taxon>Staphylococcaceae</taxon>
        <taxon>Staphylococcus</taxon>
    </lineage>
</organism>
<sequence>MNQEVKNKIFSILKITFATALFIFVAITLYRELSGINFKDTLVEFSKINRMSLVLLFIGGGASLVILSMYDVILSRALKMDISLGKVLRVSYIINALNAIVGFGGFIGAGVRAMVYKNYTHDKKKLVHFISLILISMLTGLSLLSLLIVFHVFDASLILDKITWVRWVLYVVSFFLPLFIIYSMVRPPDKNNRFVGLYCTLVSCVEWLAAAVVLYFCGVIVDAHVSFMSFIAIFIIAALSGLVSFIPGGFGAFDLVVLLGFKTLGVPEEKVLLMLLLYRFAYYFVPVIIALILSSFEFGTSAKKYIEGSKYFIPAKDVTSFLMSYQKDIIAKIPSLSLAILVFFTSMIFFVNNLTIVYDALYDGNHLTYYILLAIHTSACLLLLLNVVGIYKQSRRAIIFAMISILLITVATFFTYASYILITWLAIIFVLLIVAFRRARRLKRPVRMRNIVAMLLFSLFILYVNHIFIAGTLYALDIYTIEMHTSVLRYYFWLTILIIAIIIGMIAWLFDYQFSKVRISSKIEDCEEIINQYGGNYLSHLIYSGDKQFFTNENKTAFLMYRYKASSLVVLGDPLGDENAFDELLEAFYNYAEYLGYDVIFYQVTDQHMPLYHNFGNQFFKLGEEAIIDLTQFSTSGKKRRGFRATLNKFDELNISFEIIEPPFSTEFINELQHVSDLWLDNRQEMHFSVGQFNEEYLSKAPIGVMRNEENEVIAFCSLMPTYFNDAISVDLIRWLPELDLPLMDGLYLHMLLWSKEQGYTKFNMGMATLSNVGQLHYSYLRERLAGRVFEHFNGLYRFQGLRRYKSKYNPNWEPRFLVYRKDNSLWESLSKVMRVIRHK</sequence>
<name>MPRF_STAAM</name>
<gene>
    <name type="primary">mprF</name>
    <name type="ordered locus">SAV1360</name>
</gene>
<proteinExistence type="inferred from homology"/>
<comment type="function">
    <text evidence="1">Catalyzes the transfer of a lysyl group from L-lysyl-tRNA(Lys) to membrane-bound phosphatidylglycerol (PG), which produces lysylphosphatidylglycerol (LPG), a major component of the bacterial membrane with a positive net charge. LPG synthesis contributes to bacterial virulence as it is involved in the resistance mechanism against cationic antimicrobial peptides (CAMP) produces by the host's immune system (defensins, cathelicidins) and by the competing microorganisms (bacteriocins). In fact, the modification of anionic phosphatidylglycerol with positively charged L-lysine results in repulsion of the peptides (By similarity).</text>
</comment>
<comment type="catalytic activity">
    <reaction>
        <text>L-lysyl-tRNA(Lys) + a 1,2-diacyl-sn-glycero-3-phospho-(1'-sn-glycerol) = a 1,2-diacyl-sn-glycero-3-phospho-1'-(3'-O-L-lysyl)-sn-glycerol + tRNA(Lys)</text>
        <dbReference type="Rhea" id="RHEA:10668"/>
        <dbReference type="Rhea" id="RHEA-COMP:9696"/>
        <dbReference type="Rhea" id="RHEA-COMP:9697"/>
        <dbReference type="ChEBI" id="CHEBI:64716"/>
        <dbReference type="ChEBI" id="CHEBI:75792"/>
        <dbReference type="ChEBI" id="CHEBI:78442"/>
        <dbReference type="ChEBI" id="CHEBI:78529"/>
        <dbReference type="EC" id="2.3.2.3"/>
    </reaction>
</comment>
<comment type="subcellular location">
    <subcellularLocation>
        <location>Cell membrane</location>
        <topology>Multi-pass membrane protein</topology>
    </subcellularLocation>
</comment>
<comment type="similarity">
    <text evidence="3">Belongs to the LPG synthase family.</text>
</comment>
<reference key="1">
    <citation type="journal article" date="2001" name="Lancet">
        <title>Whole genome sequencing of meticillin-resistant Staphylococcus aureus.</title>
        <authorList>
            <person name="Kuroda M."/>
            <person name="Ohta T."/>
            <person name="Uchiyama I."/>
            <person name="Baba T."/>
            <person name="Yuzawa H."/>
            <person name="Kobayashi I."/>
            <person name="Cui L."/>
            <person name="Oguchi A."/>
            <person name="Aoki K."/>
            <person name="Nagai Y."/>
            <person name="Lian J.-Q."/>
            <person name="Ito T."/>
            <person name="Kanamori M."/>
            <person name="Matsumaru H."/>
            <person name="Maruyama A."/>
            <person name="Murakami H."/>
            <person name="Hosoyama A."/>
            <person name="Mizutani-Ui Y."/>
            <person name="Takahashi N.K."/>
            <person name="Sawano T."/>
            <person name="Inoue R."/>
            <person name="Kaito C."/>
            <person name="Sekimizu K."/>
            <person name="Hirakawa H."/>
            <person name="Kuhara S."/>
            <person name="Goto S."/>
            <person name="Yabuzaki J."/>
            <person name="Kanehisa M."/>
            <person name="Yamashita A."/>
            <person name="Oshima K."/>
            <person name="Furuya K."/>
            <person name="Yoshino C."/>
            <person name="Shiba T."/>
            <person name="Hattori M."/>
            <person name="Ogasawara N."/>
            <person name="Hayashi H."/>
            <person name="Hiramatsu K."/>
        </authorList>
    </citation>
    <scope>NUCLEOTIDE SEQUENCE [LARGE SCALE GENOMIC DNA]</scope>
    <source>
        <strain>Mu50 / ATCC 700699</strain>
    </source>
</reference>
<evidence type="ECO:0000250" key="1"/>
<evidence type="ECO:0000255" key="2"/>
<evidence type="ECO:0000305" key="3"/>